<organism>
    <name type="scientific">Nicotiana alata</name>
    <name type="common">Winged tobacco</name>
    <name type="synonym">Persian tobacco</name>
    <dbReference type="NCBI Taxonomy" id="4087"/>
    <lineage>
        <taxon>Eukaryota</taxon>
        <taxon>Viridiplantae</taxon>
        <taxon>Streptophyta</taxon>
        <taxon>Embryophyta</taxon>
        <taxon>Tracheophyta</taxon>
        <taxon>Spermatophyta</taxon>
        <taxon>Magnoliopsida</taxon>
        <taxon>eudicotyledons</taxon>
        <taxon>Gunneridae</taxon>
        <taxon>Pentapetalae</taxon>
        <taxon>asterids</taxon>
        <taxon>lamiids</taxon>
        <taxon>Solanales</taxon>
        <taxon>Solanaceae</taxon>
        <taxon>Nicotianoideae</taxon>
        <taxon>Nicotianeae</taxon>
        <taxon>Nicotiana</taxon>
    </lineage>
</organism>
<protein>
    <recommendedName>
        <fullName>Flower-specific defensin</fullName>
    </recommendedName>
    <alternativeName>
        <fullName>NaD1</fullName>
    </alternativeName>
</protein>
<comment type="function">
    <text>Plant defense peptide with antifungal activity against F.oxysporum and B.cinerea. Retards the growth of the Lepidopteran insect pests H.armigera and H.punctigera.</text>
</comment>
<comment type="biophysicochemical properties">
    <phDependence>
        <text>Stable under extremes of pH.</text>
    </phDependence>
    <temperatureDependence>
        <text>Stable under extremes of temperature.</text>
    </temperatureDependence>
</comment>
<comment type="subcellular location">
    <subcellularLocation>
        <location evidence="1">Secreted</location>
    </subcellularLocation>
    <subcellularLocation>
        <location evidence="2">Vacuole</location>
    </subcellularLocation>
</comment>
<comment type="tissue specificity">
    <text>Most abundant in the epidermal cell layers of the petals and sepals, within the connective cells of the anthers, and the cortical cells of the style. Not detected in the tapetum, pollen mother cells, the transmitting tissue, the vascular bundles of the anther and style or in leaves. Expressed also in ovaries, but barley detectable in roots.</text>
</comment>
<comment type="similarity">
    <text evidence="3">Belongs to the DEFL family.</text>
</comment>
<name>DEF_NICAL</name>
<keyword id="KW-0002">3D-structure</keyword>
<keyword id="KW-0929">Antimicrobial</keyword>
<keyword id="KW-0903">Direct protein sequencing</keyword>
<keyword id="KW-1015">Disulfide bond</keyword>
<keyword id="KW-0295">Fungicide</keyword>
<keyword id="KW-0611">Plant defense</keyword>
<keyword id="KW-0964">Secreted</keyword>
<keyword id="KW-0732">Signal</keyword>
<keyword id="KW-0926">Vacuole</keyword>
<sequence length="105" mass="11722">MARSLCFMAFAILAMMLFVAYEVQARECKTESNTFPGICITKPPCRKACISEKFTDGHCSKILRRCLCTKPCVFDEKMTKTGAEILAEEAKTLAAALLEEEIMDN</sequence>
<feature type="signal peptide" evidence="2">
    <location>
        <begin position="1"/>
        <end position="25"/>
    </location>
</feature>
<feature type="chain" id="PRO_0000007042" description="Flower-specific defensin">
    <location>
        <begin position="26"/>
        <end position="72"/>
    </location>
</feature>
<feature type="propeptide" id="PRO_0000007043" description="Removed in mature form">
    <location>
        <begin position="73"/>
        <end position="105"/>
    </location>
</feature>
<feature type="disulfide bond">
    <location>
        <begin position="28"/>
        <end position="72"/>
    </location>
</feature>
<feature type="disulfide bond">
    <location>
        <begin position="39"/>
        <end position="59"/>
    </location>
</feature>
<feature type="disulfide bond">
    <location>
        <begin position="45"/>
        <end position="66"/>
    </location>
</feature>
<feature type="disulfide bond">
    <location>
        <begin position="49"/>
        <end position="68"/>
    </location>
</feature>
<feature type="strand" evidence="4">
    <location>
        <begin position="27"/>
        <end position="31"/>
    </location>
</feature>
<feature type="helix" evidence="4">
    <location>
        <begin position="42"/>
        <end position="51"/>
    </location>
</feature>
<feature type="strand" evidence="4">
    <location>
        <begin position="55"/>
        <end position="59"/>
    </location>
</feature>
<feature type="strand" evidence="4">
    <location>
        <begin position="61"/>
        <end position="63"/>
    </location>
</feature>
<feature type="strand" evidence="4">
    <location>
        <begin position="66"/>
        <end position="71"/>
    </location>
</feature>
<accession>Q8GTM0</accession>
<dbReference type="EMBL" id="AF509566">
    <property type="protein sequence ID" value="AAN70999.1"/>
    <property type="molecule type" value="mRNA"/>
</dbReference>
<dbReference type="PDB" id="4AAZ">
    <property type="method" value="X-ray"/>
    <property type="resolution" value="1.40 A"/>
    <property type="chains" value="A/B=26-72"/>
</dbReference>
<dbReference type="PDB" id="4AB0">
    <property type="method" value="X-ray"/>
    <property type="resolution" value="1.64 A"/>
    <property type="chains" value="A/B=26-72"/>
</dbReference>
<dbReference type="PDB" id="4CQK">
    <property type="method" value="X-ray"/>
    <property type="resolution" value="1.60 A"/>
    <property type="chains" value="A/B/C/D/E/F/G/H/I/J/K/L/M/N=26-72"/>
</dbReference>
<dbReference type="PDB" id="6B55">
    <property type="method" value="X-ray"/>
    <property type="resolution" value="2.50 A"/>
    <property type="chains" value="A/B/C/D/E/F/G/H/I/J/K/L/M/N/O/P/Q/R/S/T=25-72"/>
</dbReference>
<dbReference type="PDBsum" id="4AAZ"/>
<dbReference type="PDBsum" id="4AB0"/>
<dbReference type="PDBsum" id="4CQK"/>
<dbReference type="PDBsum" id="6B55"/>
<dbReference type="SMR" id="Q8GTM0"/>
<dbReference type="EvolutionaryTrace" id="Q8GTM0"/>
<dbReference type="GO" id="GO:0005576">
    <property type="term" value="C:extracellular region"/>
    <property type="evidence" value="ECO:0007669"/>
    <property type="project" value="UniProtKB-SubCell"/>
</dbReference>
<dbReference type="GO" id="GO:0005773">
    <property type="term" value="C:vacuole"/>
    <property type="evidence" value="ECO:0007669"/>
    <property type="project" value="UniProtKB-SubCell"/>
</dbReference>
<dbReference type="GO" id="GO:0050832">
    <property type="term" value="P:defense response to fungus"/>
    <property type="evidence" value="ECO:0007669"/>
    <property type="project" value="UniProtKB-KW"/>
</dbReference>
<dbReference type="GO" id="GO:0031640">
    <property type="term" value="P:killing of cells of another organism"/>
    <property type="evidence" value="ECO:0007669"/>
    <property type="project" value="UniProtKB-KW"/>
</dbReference>
<dbReference type="CDD" id="cd00107">
    <property type="entry name" value="Knot1"/>
    <property type="match status" value="1"/>
</dbReference>
<dbReference type="Gene3D" id="3.30.30.10">
    <property type="entry name" value="Knottin, scorpion toxin-like"/>
    <property type="match status" value="1"/>
</dbReference>
<dbReference type="InterPro" id="IPR008176">
    <property type="entry name" value="Defensin_plant"/>
</dbReference>
<dbReference type="InterPro" id="IPR003614">
    <property type="entry name" value="Scorpion_toxin-like"/>
</dbReference>
<dbReference type="InterPro" id="IPR036574">
    <property type="entry name" value="Scorpion_toxin-like_sf"/>
</dbReference>
<dbReference type="PANTHER" id="PTHR33147:SF128">
    <property type="entry name" value="DEFENSIN-LIKE PROTEIN"/>
    <property type="match status" value="1"/>
</dbReference>
<dbReference type="PANTHER" id="PTHR33147">
    <property type="entry name" value="DEFENSIN-LIKE PROTEIN 1"/>
    <property type="match status" value="1"/>
</dbReference>
<dbReference type="Pfam" id="PF00304">
    <property type="entry name" value="Gamma-thionin"/>
    <property type="match status" value="1"/>
</dbReference>
<dbReference type="PRINTS" id="PR00288">
    <property type="entry name" value="PUROTHIONIN"/>
</dbReference>
<dbReference type="SMART" id="SM00505">
    <property type="entry name" value="Knot1"/>
    <property type="match status" value="1"/>
</dbReference>
<dbReference type="SUPFAM" id="SSF57095">
    <property type="entry name" value="Scorpion toxin-like"/>
    <property type="match status" value="1"/>
</dbReference>
<dbReference type="PROSITE" id="PS00940">
    <property type="entry name" value="GAMMA_THIONIN"/>
    <property type="match status" value="1"/>
</dbReference>
<gene>
    <name type="primary">D1</name>
</gene>
<proteinExistence type="evidence at protein level"/>
<evidence type="ECO:0000250" key="1"/>
<evidence type="ECO:0000269" key="2">
    <source>
    </source>
</evidence>
<evidence type="ECO:0000305" key="3"/>
<evidence type="ECO:0007829" key="4">
    <source>
        <dbReference type="PDB" id="4AAZ"/>
    </source>
</evidence>
<reference key="1">
    <citation type="journal article" date="2003" name="Plant Physiol.">
        <title>Isolation and properties of floral defensins from ornamental tobacco and petunia.</title>
        <authorList>
            <person name="Lay F.T."/>
            <person name="Brugliera F."/>
            <person name="Anderson M.A."/>
        </authorList>
    </citation>
    <scope>NUCLEOTIDE SEQUENCE [MRNA]</scope>
    <scope>SUBCELLULAR LOCATION</scope>
    <scope>PROTEIN SEQUENCE OF 26-33</scope>
</reference>
<reference key="2">
    <citation type="journal article" date="2003" name="J. Mol. Biol.">
        <title>The three-dimensional solution structure of NaD1, a new floral defensin from Nicotiana alata and its application to a homology model of the crop defense protein alfAFP.</title>
        <authorList>
            <person name="Lay F.T."/>
            <person name="Schirra H.J."/>
            <person name="Scanlon M.J."/>
            <person name="Anderson M.A."/>
            <person name="Craik D.J."/>
        </authorList>
    </citation>
    <scope>STRUCTURE BY NMR OF 26-72</scope>
</reference>